<accession>Q12Q43</accession>
<name>RISB_SHEDO</name>
<organism>
    <name type="scientific">Shewanella denitrificans (strain OS217 / ATCC BAA-1090 / DSM 15013)</name>
    <dbReference type="NCBI Taxonomy" id="318161"/>
    <lineage>
        <taxon>Bacteria</taxon>
        <taxon>Pseudomonadati</taxon>
        <taxon>Pseudomonadota</taxon>
        <taxon>Gammaproteobacteria</taxon>
        <taxon>Alteromonadales</taxon>
        <taxon>Shewanellaceae</taxon>
        <taxon>Shewanella</taxon>
    </lineage>
</organism>
<proteinExistence type="inferred from homology"/>
<feature type="chain" id="PRO_1000040509" description="6,7-dimethyl-8-ribityllumazine synthase">
    <location>
        <begin position="1"/>
        <end position="159"/>
    </location>
</feature>
<feature type="active site" description="Proton donor" evidence="1">
    <location>
        <position position="89"/>
    </location>
</feature>
<feature type="binding site" evidence="1">
    <location>
        <position position="22"/>
    </location>
    <ligand>
        <name>5-amino-6-(D-ribitylamino)uracil</name>
        <dbReference type="ChEBI" id="CHEBI:15934"/>
    </ligand>
</feature>
<feature type="binding site" evidence="1">
    <location>
        <begin position="57"/>
        <end position="59"/>
    </location>
    <ligand>
        <name>5-amino-6-(D-ribitylamino)uracil</name>
        <dbReference type="ChEBI" id="CHEBI:15934"/>
    </ligand>
</feature>
<feature type="binding site" evidence="1">
    <location>
        <begin position="81"/>
        <end position="83"/>
    </location>
    <ligand>
        <name>5-amino-6-(D-ribitylamino)uracil</name>
        <dbReference type="ChEBI" id="CHEBI:15934"/>
    </ligand>
</feature>
<feature type="binding site" evidence="1">
    <location>
        <begin position="86"/>
        <end position="87"/>
    </location>
    <ligand>
        <name>(2S)-2-hydroxy-3-oxobutyl phosphate</name>
        <dbReference type="ChEBI" id="CHEBI:58830"/>
    </ligand>
</feature>
<feature type="binding site" evidence="1">
    <location>
        <position position="114"/>
    </location>
    <ligand>
        <name>5-amino-6-(D-ribitylamino)uracil</name>
        <dbReference type="ChEBI" id="CHEBI:15934"/>
    </ligand>
</feature>
<feature type="binding site" evidence="1">
    <location>
        <position position="128"/>
    </location>
    <ligand>
        <name>(2S)-2-hydroxy-3-oxobutyl phosphate</name>
        <dbReference type="ChEBI" id="CHEBI:58830"/>
    </ligand>
</feature>
<reference key="1">
    <citation type="submission" date="2006-03" db="EMBL/GenBank/DDBJ databases">
        <title>Complete sequence of Shewanella denitrificans OS217.</title>
        <authorList>
            <consortium name="US DOE Joint Genome Institute"/>
            <person name="Copeland A."/>
            <person name="Lucas S."/>
            <person name="Lapidus A."/>
            <person name="Barry K."/>
            <person name="Detter J.C."/>
            <person name="Glavina del Rio T."/>
            <person name="Hammon N."/>
            <person name="Israni S."/>
            <person name="Dalin E."/>
            <person name="Tice H."/>
            <person name="Pitluck S."/>
            <person name="Brettin T."/>
            <person name="Bruce D."/>
            <person name="Han C."/>
            <person name="Tapia R."/>
            <person name="Gilna P."/>
            <person name="Kiss H."/>
            <person name="Schmutz J."/>
            <person name="Larimer F."/>
            <person name="Land M."/>
            <person name="Hauser L."/>
            <person name="Kyrpides N."/>
            <person name="Lykidis A."/>
            <person name="Richardson P."/>
        </authorList>
    </citation>
    <scope>NUCLEOTIDE SEQUENCE [LARGE SCALE GENOMIC DNA]</scope>
    <source>
        <strain>OS217 / ATCC BAA-1090 / DSM 15013</strain>
    </source>
</reference>
<protein>
    <recommendedName>
        <fullName evidence="1">6,7-dimethyl-8-ribityllumazine synthase</fullName>
        <shortName evidence="1">DMRL synthase</shortName>
        <shortName evidence="1">LS</shortName>
        <shortName evidence="1">Lumazine synthase</shortName>
        <ecNumber evidence="1">2.5.1.78</ecNumber>
    </recommendedName>
</protein>
<sequence>MNVVQGNIEAKNAKVAIVVSRFNSFLVESLLDGAIDTLKRFGQVADENITVVRVPGAVELPLAARRVAASGKFDGIIALGAVIRGGTPHFDFVAGECNKGLAQVALEFDLPVSFGVLTTDTIEQAIERSGTKAGNKGGEAALGLLEMVNVLQQLEQQLS</sequence>
<keyword id="KW-1185">Reference proteome</keyword>
<keyword id="KW-0686">Riboflavin biosynthesis</keyword>
<keyword id="KW-0808">Transferase</keyword>
<evidence type="ECO:0000255" key="1">
    <source>
        <dbReference type="HAMAP-Rule" id="MF_00178"/>
    </source>
</evidence>
<gene>
    <name evidence="1" type="primary">ribH</name>
    <name type="ordered locus">Sden_1147</name>
</gene>
<dbReference type="EC" id="2.5.1.78" evidence="1"/>
<dbReference type="EMBL" id="CP000302">
    <property type="protein sequence ID" value="ABE54433.1"/>
    <property type="molecule type" value="Genomic_DNA"/>
</dbReference>
<dbReference type="RefSeq" id="WP_011495594.1">
    <property type="nucleotide sequence ID" value="NC_007954.1"/>
</dbReference>
<dbReference type="SMR" id="Q12Q43"/>
<dbReference type="STRING" id="318161.Sden_1147"/>
<dbReference type="KEGG" id="sdn:Sden_1147"/>
<dbReference type="eggNOG" id="COG0054">
    <property type="taxonomic scope" value="Bacteria"/>
</dbReference>
<dbReference type="HOGENOM" id="CLU_089358_1_1_6"/>
<dbReference type="OrthoDB" id="9809709at2"/>
<dbReference type="UniPathway" id="UPA00275">
    <property type="reaction ID" value="UER00404"/>
</dbReference>
<dbReference type="Proteomes" id="UP000001982">
    <property type="component" value="Chromosome"/>
</dbReference>
<dbReference type="GO" id="GO:0005829">
    <property type="term" value="C:cytosol"/>
    <property type="evidence" value="ECO:0007669"/>
    <property type="project" value="TreeGrafter"/>
</dbReference>
<dbReference type="GO" id="GO:0009349">
    <property type="term" value="C:riboflavin synthase complex"/>
    <property type="evidence" value="ECO:0007669"/>
    <property type="project" value="InterPro"/>
</dbReference>
<dbReference type="GO" id="GO:0000906">
    <property type="term" value="F:6,7-dimethyl-8-ribityllumazine synthase activity"/>
    <property type="evidence" value="ECO:0007669"/>
    <property type="project" value="UniProtKB-UniRule"/>
</dbReference>
<dbReference type="GO" id="GO:0009231">
    <property type="term" value="P:riboflavin biosynthetic process"/>
    <property type="evidence" value="ECO:0007669"/>
    <property type="project" value="UniProtKB-UniRule"/>
</dbReference>
<dbReference type="CDD" id="cd09209">
    <property type="entry name" value="Lumazine_synthase-I"/>
    <property type="match status" value="1"/>
</dbReference>
<dbReference type="FunFam" id="3.40.50.960:FF:000001">
    <property type="entry name" value="6,7-dimethyl-8-ribityllumazine synthase"/>
    <property type="match status" value="1"/>
</dbReference>
<dbReference type="Gene3D" id="3.40.50.960">
    <property type="entry name" value="Lumazine/riboflavin synthase"/>
    <property type="match status" value="1"/>
</dbReference>
<dbReference type="HAMAP" id="MF_00178">
    <property type="entry name" value="Lumazine_synth"/>
    <property type="match status" value="1"/>
</dbReference>
<dbReference type="InterPro" id="IPR034964">
    <property type="entry name" value="LS"/>
</dbReference>
<dbReference type="InterPro" id="IPR002180">
    <property type="entry name" value="LS/RS"/>
</dbReference>
<dbReference type="InterPro" id="IPR036467">
    <property type="entry name" value="LS/RS_sf"/>
</dbReference>
<dbReference type="NCBIfam" id="TIGR00114">
    <property type="entry name" value="lumazine-synth"/>
    <property type="match status" value="1"/>
</dbReference>
<dbReference type="NCBIfam" id="NF000812">
    <property type="entry name" value="PRK00061.1-4"/>
    <property type="match status" value="1"/>
</dbReference>
<dbReference type="PANTHER" id="PTHR21058:SF0">
    <property type="entry name" value="6,7-DIMETHYL-8-RIBITYLLUMAZINE SYNTHASE"/>
    <property type="match status" value="1"/>
</dbReference>
<dbReference type="PANTHER" id="PTHR21058">
    <property type="entry name" value="6,7-DIMETHYL-8-RIBITYLLUMAZINE SYNTHASE DMRL SYNTHASE LUMAZINE SYNTHASE"/>
    <property type="match status" value="1"/>
</dbReference>
<dbReference type="Pfam" id="PF00885">
    <property type="entry name" value="DMRL_synthase"/>
    <property type="match status" value="1"/>
</dbReference>
<dbReference type="SUPFAM" id="SSF52121">
    <property type="entry name" value="Lumazine synthase"/>
    <property type="match status" value="1"/>
</dbReference>
<comment type="function">
    <text evidence="1">Catalyzes the formation of 6,7-dimethyl-8-ribityllumazine by condensation of 5-amino-6-(D-ribitylamino)uracil with 3,4-dihydroxy-2-butanone 4-phosphate. This is the penultimate step in the biosynthesis of riboflavin.</text>
</comment>
<comment type="catalytic activity">
    <reaction evidence="1">
        <text>(2S)-2-hydroxy-3-oxobutyl phosphate + 5-amino-6-(D-ribitylamino)uracil = 6,7-dimethyl-8-(1-D-ribityl)lumazine + phosphate + 2 H2O + H(+)</text>
        <dbReference type="Rhea" id="RHEA:26152"/>
        <dbReference type="ChEBI" id="CHEBI:15377"/>
        <dbReference type="ChEBI" id="CHEBI:15378"/>
        <dbReference type="ChEBI" id="CHEBI:15934"/>
        <dbReference type="ChEBI" id="CHEBI:43474"/>
        <dbReference type="ChEBI" id="CHEBI:58201"/>
        <dbReference type="ChEBI" id="CHEBI:58830"/>
        <dbReference type="EC" id="2.5.1.78"/>
    </reaction>
</comment>
<comment type="pathway">
    <text evidence="1">Cofactor biosynthesis; riboflavin biosynthesis; riboflavin from 2-hydroxy-3-oxobutyl phosphate and 5-amino-6-(D-ribitylamino)uracil: step 1/2.</text>
</comment>
<comment type="subunit">
    <text evidence="1">Forms an icosahedral capsid composed of 60 subunits, arranged as a dodecamer of pentamers.</text>
</comment>
<comment type="similarity">
    <text evidence="1">Belongs to the DMRL synthase family.</text>
</comment>